<keyword id="KW-1003">Cell membrane</keyword>
<keyword id="KW-0961">Cell wall biogenesis/degradation</keyword>
<keyword id="KW-0464">Manganese</keyword>
<keyword id="KW-0472">Membrane</keyword>
<keyword id="KW-0479">Metal-binding</keyword>
<keyword id="KW-0964">Secreted</keyword>
<keyword id="KW-0808">Transferase</keyword>
<keyword id="KW-0812">Transmembrane</keyword>
<keyword id="KW-1133">Transmembrane helix</keyword>
<evidence type="ECO:0000250" key="1"/>
<evidence type="ECO:0000255" key="2"/>
<evidence type="ECO:0000256" key="3">
    <source>
        <dbReference type="SAM" id="MobiDB-lite"/>
    </source>
</evidence>
<evidence type="ECO:0000305" key="4"/>
<gene>
    <name type="primary">ltaS</name>
    <name type="ordered locus">SAR0772</name>
</gene>
<name>LTAS_STAAR</name>
<reference key="1">
    <citation type="journal article" date="2004" name="Proc. Natl. Acad. Sci. U.S.A.">
        <title>Complete genomes of two clinical Staphylococcus aureus strains: evidence for the rapid evolution of virulence and drug resistance.</title>
        <authorList>
            <person name="Holden M.T.G."/>
            <person name="Feil E.J."/>
            <person name="Lindsay J.A."/>
            <person name="Peacock S.J."/>
            <person name="Day N.P.J."/>
            <person name="Enright M.C."/>
            <person name="Foster T.J."/>
            <person name="Moore C.E."/>
            <person name="Hurst L."/>
            <person name="Atkin R."/>
            <person name="Barron A."/>
            <person name="Bason N."/>
            <person name="Bentley S.D."/>
            <person name="Chillingworth C."/>
            <person name="Chillingworth T."/>
            <person name="Churcher C."/>
            <person name="Clark L."/>
            <person name="Corton C."/>
            <person name="Cronin A."/>
            <person name="Doggett J."/>
            <person name="Dowd L."/>
            <person name="Feltwell T."/>
            <person name="Hance Z."/>
            <person name="Harris B."/>
            <person name="Hauser H."/>
            <person name="Holroyd S."/>
            <person name="Jagels K."/>
            <person name="James K.D."/>
            <person name="Lennard N."/>
            <person name="Line A."/>
            <person name="Mayes R."/>
            <person name="Moule S."/>
            <person name="Mungall K."/>
            <person name="Ormond D."/>
            <person name="Quail M.A."/>
            <person name="Rabbinowitsch E."/>
            <person name="Rutherford K.M."/>
            <person name="Sanders M."/>
            <person name="Sharp S."/>
            <person name="Simmonds M."/>
            <person name="Stevens K."/>
            <person name="Whitehead S."/>
            <person name="Barrell B.G."/>
            <person name="Spratt B.G."/>
            <person name="Parkhill J."/>
        </authorList>
    </citation>
    <scope>NUCLEOTIDE SEQUENCE [LARGE SCALE GENOMIC DNA]</scope>
    <source>
        <strain>MRSA252</strain>
    </source>
</reference>
<protein>
    <recommendedName>
        <fullName>Lipoteichoic acid synthase</fullName>
    </recommendedName>
    <component>
        <recommendedName>
            <fullName>Glycerol phosphate lipoteichoic acid synthase</fullName>
            <shortName>LTA synthase</shortName>
            <ecNumber>2.7.8.-</ecNumber>
        </recommendedName>
        <alternativeName>
            <fullName>Polyglycerol phosphate synthase</fullName>
        </alternativeName>
    </component>
    <component>
        <recommendedName>
            <fullName>Processed glycerol phosphate lipoteichoic acid synthase</fullName>
        </recommendedName>
    </component>
</protein>
<feature type="chain" id="PRO_0000305354" description="Glycerol phosphate lipoteichoic acid synthase">
    <location>
        <begin position="1"/>
        <end position="217"/>
    </location>
</feature>
<feature type="chain" id="PRO_0000305355" description="Processed glycerol phosphate lipoteichoic acid synthase">
    <location>
        <begin position="218"/>
        <end position="646"/>
    </location>
</feature>
<feature type="topological domain" description="Cytoplasmic" evidence="2">
    <location>
        <begin position="1"/>
        <end position="7"/>
    </location>
</feature>
<feature type="transmembrane region" description="Helical" evidence="2">
    <location>
        <begin position="8"/>
        <end position="28"/>
    </location>
</feature>
<feature type="topological domain" description="Extracellular" evidence="2">
    <location>
        <begin position="29"/>
        <end position="43"/>
    </location>
</feature>
<feature type="transmembrane region" description="Helical" evidence="2">
    <location>
        <begin position="44"/>
        <end position="64"/>
    </location>
</feature>
<feature type="topological domain" description="Cytoplasmic" evidence="2">
    <location>
        <begin position="65"/>
        <end position="68"/>
    </location>
</feature>
<feature type="transmembrane region" description="Helical" evidence="2">
    <location>
        <begin position="69"/>
        <end position="89"/>
    </location>
</feature>
<feature type="topological domain" description="Extracellular" evidence="2">
    <location>
        <begin position="90"/>
        <end position="119"/>
    </location>
</feature>
<feature type="transmembrane region" description="Helical" evidence="2">
    <location>
        <begin position="120"/>
        <end position="140"/>
    </location>
</feature>
<feature type="topological domain" description="Cytoplasmic" evidence="2">
    <location>
        <begin position="141"/>
        <end position="153"/>
    </location>
</feature>
<feature type="transmembrane region" description="Helical" evidence="2">
    <location>
        <begin position="154"/>
        <end position="174"/>
    </location>
</feature>
<feature type="topological domain" description="Extracellular" evidence="2">
    <location>
        <begin position="175"/>
        <end position="646"/>
    </location>
</feature>
<feature type="region of interest" description="Disordered" evidence="3">
    <location>
        <begin position="623"/>
        <end position="646"/>
    </location>
</feature>
<feature type="compositionally biased region" description="Basic and acidic residues" evidence="3">
    <location>
        <begin position="623"/>
        <end position="638"/>
    </location>
</feature>
<feature type="active site" evidence="1">
    <location>
        <position position="300"/>
    </location>
</feature>
<feature type="binding site" evidence="1">
    <location>
        <position position="255"/>
    </location>
    <ligand>
        <name>Mn(2+)</name>
        <dbReference type="ChEBI" id="CHEBI:29035"/>
    </ligand>
</feature>
<feature type="binding site" evidence="1">
    <location>
        <position position="300"/>
    </location>
    <ligand>
        <name>Mn(2+)</name>
        <dbReference type="ChEBI" id="CHEBI:29035"/>
    </ligand>
</feature>
<feature type="binding site" evidence="1">
    <location>
        <position position="416"/>
    </location>
    <ligand>
        <name>substrate</name>
    </ligand>
</feature>
<feature type="binding site" evidence="1">
    <location>
        <position position="475"/>
    </location>
    <ligand>
        <name>Mn(2+)</name>
        <dbReference type="ChEBI" id="CHEBI:29035"/>
    </ligand>
</feature>
<feature type="binding site" evidence="1">
    <location>
        <position position="476"/>
    </location>
    <ligand>
        <name>Mn(2+)</name>
        <dbReference type="ChEBI" id="CHEBI:29035"/>
    </ligand>
</feature>
<feature type="site" description="Cleavage" evidence="1">
    <location>
        <begin position="217"/>
        <end position="218"/>
    </location>
</feature>
<sequence>MSSQKKKISLFAFFLLTVITITLKTYFSYYVDFSLGVKGLVQNLILLMNPYSLVALVLSVFLFFKGKKAFWFMFIGGFLLTFLLYANVVYFRFFSDFLTFSTLNQVGNVESMGGAVSASFKWYDFVYFIDTLVYLFILIFKTKWLDTKAFSKKFVPVVMAASVALFFLNLAFAETDRPELLTRTFDHKYLVKYLGPYNFTVYDGVKTIENNQQKALASEDDLTKVLNYTKQRQTEPNPEYYGVAKKKNIIKIHLESFQTFLINKKVNGKEVTPFLNKLSSGKEQFTYFPNFFHQTGQGKTSDSEFTMDNSLYGLPQGSAFSLKGDNTYQSLPAILDQKQGYKSDVMHGDYKTFWNRDQVYKHFGIDKFYDATYYDMSDKNVVNLGLKDKIFFKDSANYQAKMKSPFYSHLITLTNHYPFTLDEKDATIEKSNTGDATVDGYIQTARYLDEALEEYINDLKKKGLYDNSVIMIYGDHYGISENHNNAMEKLLGEKITPAKFTDLNRTGFWIKIPGKSGGINNEYAGQVDVMPTILHLAGIDTKNYLMFGTDLFSKGHNQVVPFRNGDFITKDYKYVNGKIYSNKNNELITTQPADFEKNKKQVEKDLEMSDNVLNGDLFRFYKNPDFKKVNPSKYKYETGPKANSKK</sequence>
<dbReference type="EC" id="2.7.8.-"/>
<dbReference type="EMBL" id="BX571856">
    <property type="protein sequence ID" value="CAG39782.1"/>
    <property type="molecule type" value="Genomic_DNA"/>
</dbReference>
<dbReference type="RefSeq" id="WP_000098285.1">
    <property type="nucleotide sequence ID" value="NC_002952.2"/>
</dbReference>
<dbReference type="SMR" id="Q6GIS3"/>
<dbReference type="KEGG" id="sar:SAR0772"/>
<dbReference type="HOGENOM" id="CLU_021310_0_0_9"/>
<dbReference type="UniPathway" id="UPA00556"/>
<dbReference type="Proteomes" id="UP000000596">
    <property type="component" value="Chromosome"/>
</dbReference>
<dbReference type="GO" id="GO:0005576">
    <property type="term" value="C:extracellular region"/>
    <property type="evidence" value="ECO:0007669"/>
    <property type="project" value="UniProtKB-SubCell"/>
</dbReference>
<dbReference type="GO" id="GO:0005886">
    <property type="term" value="C:plasma membrane"/>
    <property type="evidence" value="ECO:0007669"/>
    <property type="project" value="UniProtKB-SubCell"/>
</dbReference>
<dbReference type="GO" id="GO:0046872">
    <property type="term" value="F:metal ion binding"/>
    <property type="evidence" value="ECO:0007669"/>
    <property type="project" value="UniProtKB-KW"/>
</dbReference>
<dbReference type="GO" id="GO:0016740">
    <property type="term" value="F:transferase activity"/>
    <property type="evidence" value="ECO:0007669"/>
    <property type="project" value="UniProtKB-KW"/>
</dbReference>
<dbReference type="GO" id="GO:0071555">
    <property type="term" value="P:cell wall organization"/>
    <property type="evidence" value="ECO:0007669"/>
    <property type="project" value="UniProtKB-KW"/>
</dbReference>
<dbReference type="GO" id="GO:0070395">
    <property type="term" value="P:lipoteichoic acid biosynthetic process"/>
    <property type="evidence" value="ECO:0007669"/>
    <property type="project" value="UniProtKB-UniPathway"/>
</dbReference>
<dbReference type="CDD" id="cd16015">
    <property type="entry name" value="LTA_synthase"/>
    <property type="match status" value="1"/>
</dbReference>
<dbReference type="Gene3D" id="3.30.1120.170">
    <property type="match status" value="1"/>
</dbReference>
<dbReference type="Gene3D" id="3.40.720.10">
    <property type="entry name" value="Alkaline Phosphatase, subunit A"/>
    <property type="match status" value="1"/>
</dbReference>
<dbReference type="InterPro" id="IPR017850">
    <property type="entry name" value="Alkaline_phosphatase_core_sf"/>
</dbReference>
<dbReference type="InterPro" id="IPR012160">
    <property type="entry name" value="LtaS-like"/>
</dbReference>
<dbReference type="InterPro" id="IPR050448">
    <property type="entry name" value="OpgB/LTA_synthase_biosynth"/>
</dbReference>
<dbReference type="InterPro" id="IPR000917">
    <property type="entry name" value="Sulfatase_N"/>
</dbReference>
<dbReference type="PANTHER" id="PTHR47371">
    <property type="entry name" value="LIPOTEICHOIC ACID SYNTHASE"/>
    <property type="match status" value="1"/>
</dbReference>
<dbReference type="PANTHER" id="PTHR47371:SF3">
    <property type="entry name" value="PHOSPHOGLYCEROL TRANSFERASE I"/>
    <property type="match status" value="1"/>
</dbReference>
<dbReference type="Pfam" id="PF00884">
    <property type="entry name" value="Sulfatase"/>
    <property type="match status" value="1"/>
</dbReference>
<dbReference type="PIRSF" id="PIRSF005091">
    <property type="entry name" value="Mmb_sulf_HI1246"/>
    <property type="match status" value="1"/>
</dbReference>
<dbReference type="SUPFAM" id="SSF53649">
    <property type="entry name" value="Alkaline phosphatase-like"/>
    <property type="match status" value="1"/>
</dbReference>
<proteinExistence type="inferred from homology"/>
<accession>Q6GIS3</accession>
<comment type="function">
    <text evidence="1">Catalyzes the polymerization of lipoteichoic acid (LTA) polyglycerol phosphate, a reaction that presumably uses phosphatidylglycerol (PG) as substrate. Is required for staphylococcal growth and cell division process (By similarity).</text>
</comment>
<comment type="pathway">
    <text>Cell wall biogenesis; lipoteichoic acid biosynthesis.</text>
</comment>
<comment type="subcellular location">
    <subcellularLocation>
        <location evidence="4">Cell membrane</location>
        <topology evidence="4">Multi-pass membrane protein</topology>
    </subcellularLocation>
</comment>
<comment type="subcellular location">
    <molecule>Processed glycerol phosphate lipoteichoic acid synthase</molecule>
    <subcellularLocation>
        <location evidence="1">Secreted</location>
    </subcellularLocation>
</comment>
<comment type="PTM">
    <text evidence="1">Proteolytically cleaved.</text>
</comment>
<comment type="similarity">
    <text evidence="4">Belongs to the LTA synthase family.</text>
</comment>
<organism>
    <name type="scientific">Staphylococcus aureus (strain MRSA252)</name>
    <dbReference type="NCBI Taxonomy" id="282458"/>
    <lineage>
        <taxon>Bacteria</taxon>
        <taxon>Bacillati</taxon>
        <taxon>Bacillota</taxon>
        <taxon>Bacilli</taxon>
        <taxon>Bacillales</taxon>
        <taxon>Staphylococcaceae</taxon>
        <taxon>Staphylococcus</taxon>
    </lineage>
</organism>